<comment type="function">
    <text evidence="1">Inhibits RpoS proteolysis by regulating RssB activity, thereby increasing the stability of the sigma stress factor RpoS during magnesium starvation.</text>
</comment>
<comment type="subcellular location">
    <subcellularLocation>
        <location evidence="1">Cytoplasm</location>
    </subcellularLocation>
</comment>
<comment type="similarity">
    <text evidence="1">Belongs to the IraM/RssC family.</text>
</comment>
<evidence type="ECO:0000255" key="1">
    <source>
        <dbReference type="HAMAP-Rule" id="MF_01199"/>
    </source>
</evidence>
<reference key="1">
    <citation type="journal article" date="2002" name="Nucleic Acids Res.">
        <title>Genome sequence of Shigella flexneri 2a: insights into pathogenicity through comparison with genomes of Escherichia coli K12 and O157.</title>
        <authorList>
            <person name="Jin Q."/>
            <person name="Yuan Z."/>
            <person name="Xu J."/>
            <person name="Wang Y."/>
            <person name="Shen Y."/>
            <person name="Lu W."/>
            <person name="Wang J."/>
            <person name="Liu H."/>
            <person name="Yang J."/>
            <person name="Yang F."/>
            <person name="Zhang X."/>
            <person name="Zhang J."/>
            <person name="Yang G."/>
            <person name="Wu H."/>
            <person name="Qu D."/>
            <person name="Dong J."/>
            <person name="Sun L."/>
            <person name="Xue Y."/>
            <person name="Zhao A."/>
            <person name="Gao Y."/>
            <person name="Zhu J."/>
            <person name="Kan B."/>
            <person name="Ding K."/>
            <person name="Chen S."/>
            <person name="Cheng H."/>
            <person name="Yao Z."/>
            <person name="He B."/>
            <person name="Chen R."/>
            <person name="Ma D."/>
            <person name="Qiang B."/>
            <person name="Wen Y."/>
            <person name="Hou Y."/>
            <person name="Yu J."/>
        </authorList>
    </citation>
    <scope>NUCLEOTIDE SEQUENCE [LARGE SCALE GENOMIC DNA]</scope>
    <source>
        <strain>301 / Serotype 2a</strain>
    </source>
</reference>
<reference key="2">
    <citation type="journal article" date="2003" name="Infect. Immun.">
        <title>Complete genome sequence and comparative genomics of Shigella flexneri serotype 2a strain 2457T.</title>
        <authorList>
            <person name="Wei J."/>
            <person name="Goldberg M.B."/>
            <person name="Burland V."/>
            <person name="Venkatesan M.M."/>
            <person name="Deng W."/>
            <person name="Fournier G."/>
            <person name="Mayhew G.F."/>
            <person name="Plunkett G. III"/>
            <person name="Rose D.J."/>
            <person name="Darling A."/>
            <person name="Mau B."/>
            <person name="Perna N.T."/>
            <person name="Payne S.M."/>
            <person name="Runyen-Janecky L.J."/>
            <person name="Zhou S."/>
            <person name="Schwartz D.C."/>
            <person name="Blattner F.R."/>
        </authorList>
    </citation>
    <scope>NUCLEOTIDE SEQUENCE [LARGE SCALE GENOMIC DNA]</scope>
    <source>
        <strain>ATCC 700930 / 2457T / Serotype 2a</strain>
    </source>
</reference>
<keyword id="KW-0963">Cytoplasm</keyword>
<keyword id="KW-1185">Reference proteome</keyword>
<keyword id="KW-0346">Stress response</keyword>
<accession>Q83L29</accession>
<proteinExistence type="inferred from homology"/>
<protein>
    <recommendedName>
        <fullName evidence="1">Anti-adapter protein IraM</fullName>
    </recommendedName>
</protein>
<dbReference type="EMBL" id="AE005674">
    <property type="protein sequence ID" value="AAN43132.1"/>
    <property type="molecule type" value="Genomic_DNA"/>
</dbReference>
<dbReference type="EMBL" id="AE014073">
    <property type="status" value="NOT_ANNOTATED_CDS"/>
    <property type="molecule type" value="Genomic_DNA"/>
</dbReference>
<dbReference type="RefSeq" id="WP_000871291.1">
    <property type="nucleotide sequence ID" value="NZ_WPGV01000177.1"/>
</dbReference>
<dbReference type="SMR" id="Q83L29"/>
<dbReference type="STRING" id="198214.SF1543"/>
<dbReference type="PaxDb" id="198214-SF1543"/>
<dbReference type="KEGG" id="sfl:SF1543"/>
<dbReference type="PATRIC" id="fig|623.156.peg.381"/>
<dbReference type="HOGENOM" id="CLU_143527_1_0_6"/>
<dbReference type="Proteomes" id="UP000001006">
    <property type="component" value="Chromosome"/>
</dbReference>
<dbReference type="Proteomes" id="UP000002673">
    <property type="component" value="Chromosome"/>
</dbReference>
<dbReference type="GO" id="GO:0005737">
    <property type="term" value="C:cytoplasm"/>
    <property type="evidence" value="ECO:0007669"/>
    <property type="project" value="UniProtKB-SubCell"/>
</dbReference>
<dbReference type="GO" id="GO:0009267">
    <property type="term" value="P:cellular response to starvation"/>
    <property type="evidence" value="ECO:0007669"/>
    <property type="project" value="UniProtKB-UniRule"/>
</dbReference>
<dbReference type="Gene3D" id="2.40.50.650">
    <property type="match status" value="1"/>
</dbReference>
<dbReference type="HAMAP" id="MF_01199">
    <property type="entry name" value="Anti_adapt_IraM"/>
    <property type="match status" value="1"/>
</dbReference>
<dbReference type="InterPro" id="IPR014448">
    <property type="entry name" value="Anti-adapter_IraM"/>
</dbReference>
<dbReference type="InterPro" id="IPR038679">
    <property type="entry name" value="PmrD_sf"/>
</dbReference>
<dbReference type="NCBIfam" id="NF007393">
    <property type="entry name" value="PRK09919.1"/>
    <property type="match status" value="1"/>
</dbReference>
<dbReference type="PIRSF" id="PIRSF007036">
    <property type="entry name" value="Elb1"/>
    <property type="match status" value="1"/>
</dbReference>
<name>IRAM_SHIFL</name>
<organism>
    <name type="scientific">Shigella flexneri</name>
    <dbReference type="NCBI Taxonomy" id="623"/>
    <lineage>
        <taxon>Bacteria</taxon>
        <taxon>Pseudomonadati</taxon>
        <taxon>Pseudomonadota</taxon>
        <taxon>Gammaproteobacteria</taxon>
        <taxon>Enterobacterales</taxon>
        <taxon>Enterobacteriaceae</taxon>
        <taxon>Shigella</taxon>
    </lineage>
</organism>
<gene>
    <name evidence="1" type="primary">iraM</name>
    <name type="ordered locus">SF1543</name>
    <name type="ordered locus">S4818.1</name>
</gene>
<feature type="chain" id="PRO_0000337888" description="Anti-adapter protein IraM">
    <location>
        <begin position="1"/>
        <end position="111"/>
    </location>
</feature>
<sequence length="111" mass="12769">MKWIVIDTVIQPSCGISFSVIWSKIKLIIWYQSDAFLPPESIFTLTHTGIMLNNKVLPVTIYNVVPFNKTFWNLIKNSQECPTNTDNVLNECFNNRCTLQICPYGLKQQSP</sequence>